<comment type="function">
    <text evidence="1">One of the primary rRNA binding proteins, it binds directly near the 3'-end of the 23S rRNA, where it nucleates assembly of the 50S subunit.</text>
</comment>
<comment type="subunit">
    <text evidence="1">Part of the 50S ribosomal subunit. Forms a cluster with proteins L14 and L19.</text>
</comment>
<comment type="PTM">
    <text evidence="1">Methylated by PrmB.</text>
</comment>
<comment type="similarity">
    <text evidence="1">Belongs to the universal ribosomal protein uL3 family.</text>
</comment>
<protein>
    <recommendedName>
        <fullName evidence="1">Large ribosomal subunit protein uL3</fullName>
    </recommendedName>
    <alternativeName>
        <fullName evidence="3">50S ribosomal protein L3</fullName>
    </alternativeName>
</protein>
<evidence type="ECO:0000255" key="1">
    <source>
        <dbReference type="HAMAP-Rule" id="MF_01325"/>
    </source>
</evidence>
<evidence type="ECO:0000256" key="2">
    <source>
        <dbReference type="SAM" id="MobiDB-lite"/>
    </source>
</evidence>
<evidence type="ECO:0000305" key="3"/>
<sequence length="219" mass="22996">MSLGLVGRKVGMTRIFTAEGDSIPVTVLDVSDNRVTQIKTVETDGYTAVQVAFGSRRASRVTKPLAGHLAKAGVQTGEILKEFRIEADKAAELSNGAVIGPDLFEVGQKVDVQGVSIGKGYAGTIKRYNFGSGRASHGNSRSHNVPGSIGMAQDPGRVFPGKRMTGHMGDETVTVQNLEIARIDADRKLLLVKGAVPGAKGGKVFVTPAVKTRAVKGAK</sequence>
<keyword id="KW-0488">Methylation</keyword>
<keyword id="KW-0687">Ribonucleoprotein</keyword>
<keyword id="KW-0689">Ribosomal protein</keyword>
<keyword id="KW-0694">RNA-binding</keyword>
<keyword id="KW-0699">rRNA-binding</keyword>
<dbReference type="EMBL" id="CP000086">
    <property type="protein sequence ID" value="ABC38445.1"/>
    <property type="molecule type" value="Genomic_DNA"/>
</dbReference>
<dbReference type="RefSeq" id="WP_009888354.1">
    <property type="nucleotide sequence ID" value="NC_007651.1"/>
</dbReference>
<dbReference type="SMR" id="Q2SU27"/>
<dbReference type="GeneID" id="45122756"/>
<dbReference type="KEGG" id="bte:BTH_I3068"/>
<dbReference type="HOGENOM" id="CLU_044142_4_1_4"/>
<dbReference type="Proteomes" id="UP000001930">
    <property type="component" value="Chromosome I"/>
</dbReference>
<dbReference type="GO" id="GO:0022625">
    <property type="term" value="C:cytosolic large ribosomal subunit"/>
    <property type="evidence" value="ECO:0007669"/>
    <property type="project" value="TreeGrafter"/>
</dbReference>
<dbReference type="GO" id="GO:0019843">
    <property type="term" value="F:rRNA binding"/>
    <property type="evidence" value="ECO:0007669"/>
    <property type="project" value="UniProtKB-UniRule"/>
</dbReference>
<dbReference type="GO" id="GO:0003735">
    <property type="term" value="F:structural constituent of ribosome"/>
    <property type="evidence" value="ECO:0007669"/>
    <property type="project" value="InterPro"/>
</dbReference>
<dbReference type="GO" id="GO:0006412">
    <property type="term" value="P:translation"/>
    <property type="evidence" value="ECO:0007669"/>
    <property type="project" value="UniProtKB-UniRule"/>
</dbReference>
<dbReference type="FunFam" id="2.40.30.10:FF:000004">
    <property type="entry name" value="50S ribosomal protein L3"/>
    <property type="match status" value="1"/>
</dbReference>
<dbReference type="FunFam" id="3.30.160.810:FF:000001">
    <property type="entry name" value="50S ribosomal protein L3"/>
    <property type="match status" value="1"/>
</dbReference>
<dbReference type="Gene3D" id="3.30.160.810">
    <property type="match status" value="1"/>
</dbReference>
<dbReference type="Gene3D" id="2.40.30.10">
    <property type="entry name" value="Translation factors"/>
    <property type="match status" value="1"/>
</dbReference>
<dbReference type="HAMAP" id="MF_01325_B">
    <property type="entry name" value="Ribosomal_uL3_B"/>
    <property type="match status" value="1"/>
</dbReference>
<dbReference type="InterPro" id="IPR000597">
    <property type="entry name" value="Ribosomal_uL3"/>
</dbReference>
<dbReference type="InterPro" id="IPR019927">
    <property type="entry name" value="Ribosomal_uL3_bac/org-type"/>
</dbReference>
<dbReference type="InterPro" id="IPR019926">
    <property type="entry name" value="Ribosomal_uL3_CS"/>
</dbReference>
<dbReference type="InterPro" id="IPR009000">
    <property type="entry name" value="Transl_B-barrel_sf"/>
</dbReference>
<dbReference type="NCBIfam" id="TIGR03625">
    <property type="entry name" value="L3_bact"/>
    <property type="match status" value="1"/>
</dbReference>
<dbReference type="PANTHER" id="PTHR11229">
    <property type="entry name" value="50S RIBOSOMAL PROTEIN L3"/>
    <property type="match status" value="1"/>
</dbReference>
<dbReference type="PANTHER" id="PTHR11229:SF16">
    <property type="entry name" value="LARGE RIBOSOMAL SUBUNIT PROTEIN UL3C"/>
    <property type="match status" value="1"/>
</dbReference>
<dbReference type="Pfam" id="PF00297">
    <property type="entry name" value="Ribosomal_L3"/>
    <property type="match status" value="1"/>
</dbReference>
<dbReference type="SUPFAM" id="SSF50447">
    <property type="entry name" value="Translation proteins"/>
    <property type="match status" value="1"/>
</dbReference>
<dbReference type="PROSITE" id="PS00474">
    <property type="entry name" value="RIBOSOMAL_L3"/>
    <property type="match status" value="1"/>
</dbReference>
<gene>
    <name evidence="1" type="primary">rplC</name>
    <name type="ordered locus">BTH_I3068</name>
</gene>
<name>RL3_BURTA</name>
<feature type="chain" id="PRO_0000241329" description="Large ribosomal subunit protein uL3">
    <location>
        <begin position="1"/>
        <end position="219"/>
    </location>
</feature>
<feature type="region of interest" description="Disordered" evidence="2">
    <location>
        <begin position="133"/>
        <end position="153"/>
    </location>
</feature>
<feature type="modified residue" description="N5-methylglutamine" evidence="1">
    <location>
        <position position="153"/>
    </location>
</feature>
<accession>Q2SU27</accession>
<reference key="1">
    <citation type="journal article" date="2005" name="BMC Genomics">
        <title>Bacterial genome adaptation to niches: divergence of the potential virulence genes in three Burkholderia species of different survival strategies.</title>
        <authorList>
            <person name="Kim H.S."/>
            <person name="Schell M.A."/>
            <person name="Yu Y."/>
            <person name="Ulrich R.L."/>
            <person name="Sarria S.H."/>
            <person name="Nierman W.C."/>
            <person name="DeShazer D."/>
        </authorList>
    </citation>
    <scope>NUCLEOTIDE SEQUENCE [LARGE SCALE GENOMIC DNA]</scope>
    <source>
        <strain>ATCC 700388 / DSM 13276 / CCUG 48851 / CIP 106301 / E264</strain>
    </source>
</reference>
<organism>
    <name type="scientific">Burkholderia thailandensis (strain ATCC 700388 / DSM 13276 / CCUG 48851 / CIP 106301 / E264)</name>
    <dbReference type="NCBI Taxonomy" id="271848"/>
    <lineage>
        <taxon>Bacteria</taxon>
        <taxon>Pseudomonadati</taxon>
        <taxon>Pseudomonadota</taxon>
        <taxon>Betaproteobacteria</taxon>
        <taxon>Burkholderiales</taxon>
        <taxon>Burkholderiaceae</taxon>
        <taxon>Burkholderia</taxon>
        <taxon>pseudomallei group</taxon>
    </lineage>
</organism>
<proteinExistence type="inferred from homology"/>